<protein>
    <recommendedName>
        <fullName evidence="1">Urease accessory protein UreF</fullName>
    </recommendedName>
</protein>
<organism>
    <name type="scientific">Picosynechococcus sp. (strain ATCC 27264 / PCC 7002 / PR-6)</name>
    <name type="common">Agmenellum quadruplicatum</name>
    <dbReference type="NCBI Taxonomy" id="32049"/>
    <lineage>
        <taxon>Bacteria</taxon>
        <taxon>Bacillati</taxon>
        <taxon>Cyanobacteriota</taxon>
        <taxon>Cyanophyceae</taxon>
        <taxon>Oscillatoriophycideae</taxon>
        <taxon>Chroococcales</taxon>
        <taxon>Geminocystaceae</taxon>
        <taxon>Picosynechococcus</taxon>
    </lineage>
</organism>
<proteinExistence type="inferred from homology"/>
<accession>B1XJM1</accession>
<sequence length="225" mass="25569">MQQLILWQLINSNFPLGAYNYSEGLEYLVESAGCSEVESFQDWLGLHLRYGSIRAEVSIVLRIVQAIASGDFNQLQYWNTWLNGTRETRELRQQSIQMGNSLLKLLGDLDENKRPQLGACREQIGKSCHYAIAFGIAIALWDIESHQAVLGYLHSWLSNLVSAGVKLIPLGQTQGQRIIYQLQPLIIETVETVVTQKEMDLYACTWGLSLASMNHETQYTRLFRS</sequence>
<evidence type="ECO:0000255" key="1">
    <source>
        <dbReference type="HAMAP-Rule" id="MF_01385"/>
    </source>
</evidence>
<dbReference type="EMBL" id="CP000951">
    <property type="protein sequence ID" value="ACB00307.1"/>
    <property type="molecule type" value="Genomic_DNA"/>
</dbReference>
<dbReference type="RefSeq" id="WP_012307925.1">
    <property type="nucleotide sequence ID" value="NZ_JAHHPU010000006.1"/>
</dbReference>
<dbReference type="SMR" id="B1XJM1"/>
<dbReference type="STRING" id="32049.SYNPCC7002_A2329"/>
<dbReference type="KEGG" id="syp:SYNPCC7002_A2329"/>
<dbReference type="eggNOG" id="COG0830">
    <property type="taxonomic scope" value="Bacteria"/>
</dbReference>
<dbReference type="HOGENOM" id="CLU_049215_2_1_3"/>
<dbReference type="Proteomes" id="UP000001688">
    <property type="component" value="Chromosome"/>
</dbReference>
<dbReference type="GO" id="GO:0005737">
    <property type="term" value="C:cytoplasm"/>
    <property type="evidence" value="ECO:0007669"/>
    <property type="project" value="UniProtKB-SubCell"/>
</dbReference>
<dbReference type="GO" id="GO:0016151">
    <property type="term" value="F:nickel cation binding"/>
    <property type="evidence" value="ECO:0007669"/>
    <property type="project" value="UniProtKB-UniRule"/>
</dbReference>
<dbReference type="Gene3D" id="1.10.4190.10">
    <property type="entry name" value="Urease accessory protein UreF"/>
    <property type="match status" value="1"/>
</dbReference>
<dbReference type="HAMAP" id="MF_01385">
    <property type="entry name" value="UreF"/>
    <property type="match status" value="1"/>
</dbReference>
<dbReference type="InterPro" id="IPR002639">
    <property type="entry name" value="UreF"/>
</dbReference>
<dbReference type="InterPro" id="IPR038277">
    <property type="entry name" value="UreF_sf"/>
</dbReference>
<dbReference type="PANTHER" id="PTHR33620">
    <property type="entry name" value="UREASE ACCESSORY PROTEIN F"/>
    <property type="match status" value="1"/>
</dbReference>
<dbReference type="PANTHER" id="PTHR33620:SF1">
    <property type="entry name" value="UREASE ACCESSORY PROTEIN F"/>
    <property type="match status" value="1"/>
</dbReference>
<dbReference type="Pfam" id="PF01730">
    <property type="entry name" value="UreF"/>
    <property type="match status" value="1"/>
</dbReference>
<dbReference type="PIRSF" id="PIRSF009467">
    <property type="entry name" value="Ureas_acces_UreF"/>
    <property type="match status" value="1"/>
</dbReference>
<keyword id="KW-0143">Chaperone</keyword>
<keyword id="KW-0963">Cytoplasm</keyword>
<keyword id="KW-0996">Nickel insertion</keyword>
<keyword id="KW-1185">Reference proteome</keyword>
<comment type="function">
    <text evidence="1">Required for maturation of urease via the functional incorporation of the urease nickel metallocenter.</text>
</comment>
<comment type="subunit">
    <text evidence="1">UreD, UreF and UreG form a complex that acts as a GTP-hydrolysis-dependent molecular chaperone, activating the urease apoprotein by helping to assemble the nickel containing metallocenter of UreC. The UreE protein probably delivers the nickel.</text>
</comment>
<comment type="subcellular location">
    <subcellularLocation>
        <location evidence="1">Cytoplasm</location>
    </subcellularLocation>
</comment>
<comment type="similarity">
    <text evidence="1">Belongs to the UreF family.</text>
</comment>
<name>UREF_PICP2</name>
<feature type="chain" id="PRO_0000344197" description="Urease accessory protein UreF">
    <location>
        <begin position="1"/>
        <end position="225"/>
    </location>
</feature>
<reference key="1">
    <citation type="submission" date="2008-02" db="EMBL/GenBank/DDBJ databases">
        <title>Complete sequence of Synechococcus sp. PCC 7002.</title>
        <authorList>
            <person name="Li T."/>
            <person name="Zhao J."/>
            <person name="Zhao C."/>
            <person name="Liu Z."/>
            <person name="Zhao F."/>
            <person name="Marquardt J."/>
            <person name="Nomura C.T."/>
            <person name="Persson S."/>
            <person name="Detter J.C."/>
            <person name="Richardson P.M."/>
            <person name="Lanz C."/>
            <person name="Schuster S.C."/>
            <person name="Wang J."/>
            <person name="Li S."/>
            <person name="Huang X."/>
            <person name="Cai T."/>
            <person name="Yu Z."/>
            <person name="Luo J."/>
            <person name="Zhao J."/>
            <person name="Bryant D.A."/>
        </authorList>
    </citation>
    <scope>NUCLEOTIDE SEQUENCE [LARGE SCALE GENOMIC DNA]</scope>
    <source>
        <strain>ATCC 27264 / PCC 7002 / PR-6</strain>
    </source>
</reference>
<gene>
    <name evidence="1" type="primary">ureF</name>
    <name type="ordered locus">SYNPCC7002_A2329</name>
</gene>